<name>FUMC_STAS1</name>
<keyword id="KW-0963">Cytoplasm</keyword>
<keyword id="KW-0456">Lyase</keyword>
<keyword id="KW-1185">Reference proteome</keyword>
<keyword id="KW-0816">Tricarboxylic acid cycle</keyword>
<sequence>MSVRIEHDTFGEIEVPADKYWGAQTERSKRNFPVGKERMPIEVVYGFAQLKRGAALANHALGKLSDAKKDAIVYACDRVLNKELDEHFPLVVWQTGSGTQSNMNVNEVVSYVANTYLKEQGIDESIHPNDDVNKSQSSNDTFPTAMHVALYNEVETKLEPALKTLRDTFKQKEEQYHDIIKIGRTHLQDATPIRLGQEISGWRYMLDKCETLLSESKAHILNLAIGGTAVGTGINAHPEFGDKVAKFIAENTGYPFVSSENKFHALTAHDEVVQLHGTLKALATDLMKIANDVRWLASGPRAGLAEISIPENEPGSSIMPGKVNPTQCEMLTMVAVQVMGNDTAVGIASSQGNFELNVYKPVILLNTLQSIYLLADGMDTFNNNCAVGIEPIPENIDNYLNQSLMLVTALNPHIGYEKAASIAKKAHREGLTLKESAIDSGYVTEEQFEQWIKPEDMVEPK</sequence>
<proteinExistence type="inferred from homology"/>
<protein>
    <recommendedName>
        <fullName evidence="1">Fumarate hydratase class II</fullName>
        <shortName evidence="1">Fumarase C</shortName>
        <ecNumber evidence="1">4.2.1.2</ecNumber>
    </recommendedName>
    <alternativeName>
        <fullName evidence="1">Aerobic fumarase</fullName>
    </alternativeName>
    <alternativeName>
        <fullName evidence="1">Iron-independent fumarase</fullName>
    </alternativeName>
</protein>
<gene>
    <name evidence="1" type="primary">fumC</name>
    <name type="ordered locus">SSP0944</name>
</gene>
<evidence type="ECO:0000255" key="1">
    <source>
        <dbReference type="HAMAP-Rule" id="MF_00743"/>
    </source>
</evidence>
<organism>
    <name type="scientific">Staphylococcus saprophyticus subsp. saprophyticus (strain ATCC 15305 / DSM 20229 / NCIMB 8711 / NCTC 7292 / S-41)</name>
    <dbReference type="NCBI Taxonomy" id="342451"/>
    <lineage>
        <taxon>Bacteria</taxon>
        <taxon>Bacillati</taxon>
        <taxon>Bacillota</taxon>
        <taxon>Bacilli</taxon>
        <taxon>Bacillales</taxon>
        <taxon>Staphylococcaceae</taxon>
        <taxon>Staphylococcus</taxon>
    </lineage>
</organism>
<comment type="function">
    <text evidence="1">Involved in the TCA cycle. Catalyzes the stereospecific interconversion of fumarate to L-malate.</text>
</comment>
<comment type="catalytic activity">
    <reaction evidence="1">
        <text>(S)-malate = fumarate + H2O</text>
        <dbReference type="Rhea" id="RHEA:12460"/>
        <dbReference type="ChEBI" id="CHEBI:15377"/>
        <dbReference type="ChEBI" id="CHEBI:15589"/>
        <dbReference type="ChEBI" id="CHEBI:29806"/>
        <dbReference type="EC" id="4.2.1.2"/>
    </reaction>
</comment>
<comment type="pathway">
    <text evidence="1">Carbohydrate metabolism; tricarboxylic acid cycle; (S)-malate from fumarate: step 1/1.</text>
</comment>
<comment type="subunit">
    <text evidence="1">Homotetramer.</text>
</comment>
<comment type="subcellular location">
    <subcellularLocation>
        <location evidence="1">Cytoplasm</location>
    </subcellularLocation>
</comment>
<comment type="miscellaneous">
    <text evidence="1">There are 2 substrate-binding sites: the catalytic A site, and the non-catalytic B site that may play a role in the transfer of substrate or product between the active site and the solvent. Alternatively, the B site may bind allosteric effectors.</text>
</comment>
<comment type="similarity">
    <text evidence="1">Belongs to the class-II fumarase/aspartase family. Fumarase subfamily.</text>
</comment>
<dbReference type="EC" id="4.2.1.2" evidence="1"/>
<dbReference type="EMBL" id="AP008934">
    <property type="protein sequence ID" value="BAE18089.1"/>
    <property type="molecule type" value="Genomic_DNA"/>
</dbReference>
<dbReference type="RefSeq" id="WP_011302807.1">
    <property type="nucleotide sequence ID" value="NZ_MTGA01000033.1"/>
</dbReference>
<dbReference type="SMR" id="Q49YP8"/>
<dbReference type="GeneID" id="3616126"/>
<dbReference type="KEGG" id="ssp:SSP0944"/>
<dbReference type="PATRIC" id="fig|342451.11.peg.943"/>
<dbReference type="eggNOG" id="COG0114">
    <property type="taxonomic scope" value="Bacteria"/>
</dbReference>
<dbReference type="HOGENOM" id="CLU_021594_4_1_9"/>
<dbReference type="OrthoDB" id="9802809at2"/>
<dbReference type="UniPathway" id="UPA00223">
    <property type="reaction ID" value="UER01007"/>
</dbReference>
<dbReference type="Proteomes" id="UP000006371">
    <property type="component" value="Chromosome"/>
</dbReference>
<dbReference type="GO" id="GO:0005737">
    <property type="term" value="C:cytoplasm"/>
    <property type="evidence" value="ECO:0007669"/>
    <property type="project" value="UniProtKB-SubCell"/>
</dbReference>
<dbReference type="GO" id="GO:0004333">
    <property type="term" value="F:fumarate hydratase activity"/>
    <property type="evidence" value="ECO:0007669"/>
    <property type="project" value="UniProtKB-UniRule"/>
</dbReference>
<dbReference type="GO" id="GO:0006106">
    <property type="term" value="P:fumarate metabolic process"/>
    <property type="evidence" value="ECO:0007669"/>
    <property type="project" value="InterPro"/>
</dbReference>
<dbReference type="GO" id="GO:0006108">
    <property type="term" value="P:malate metabolic process"/>
    <property type="evidence" value="ECO:0007669"/>
    <property type="project" value="TreeGrafter"/>
</dbReference>
<dbReference type="GO" id="GO:0006099">
    <property type="term" value="P:tricarboxylic acid cycle"/>
    <property type="evidence" value="ECO:0007669"/>
    <property type="project" value="UniProtKB-UniRule"/>
</dbReference>
<dbReference type="CDD" id="cd01362">
    <property type="entry name" value="Fumarase_classII"/>
    <property type="match status" value="1"/>
</dbReference>
<dbReference type="FunFam" id="1.10.40.30:FF:000002">
    <property type="entry name" value="Fumarate hydratase class II"/>
    <property type="match status" value="1"/>
</dbReference>
<dbReference type="FunFam" id="1.10.275.10:FF:000001">
    <property type="entry name" value="Fumarate hydratase, mitochondrial"/>
    <property type="match status" value="1"/>
</dbReference>
<dbReference type="FunFam" id="1.20.200.10:FF:000001">
    <property type="entry name" value="Fumarate hydratase, mitochondrial"/>
    <property type="match status" value="1"/>
</dbReference>
<dbReference type="Gene3D" id="1.10.40.30">
    <property type="entry name" value="Fumarase/aspartase (C-terminal domain)"/>
    <property type="match status" value="1"/>
</dbReference>
<dbReference type="Gene3D" id="1.20.200.10">
    <property type="entry name" value="Fumarase/aspartase (Central domain)"/>
    <property type="match status" value="1"/>
</dbReference>
<dbReference type="Gene3D" id="1.10.275.10">
    <property type="entry name" value="Fumarase/aspartase (N-terminal domain)"/>
    <property type="match status" value="1"/>
</dbReference>
<dbReference type="HAMAP" id="MF_00743">
    <property type="entry name" value="FumaraseC"/>
    <property type="match status" value="1"/>
</dbReference>
<dbReference type="InterPro" id="IPR005677">
    <property type="entry name" value="Fum_hydII"/>
</dbReference>
<dbReference type="InterPro" id="IPR024083">
    <property type="entry name" value="Fumarase/histidase_N"/>
</dbReference>
<dbReference type="InterPro" id="IPR018951">
    <property type="entry name" value="Fumarase_C_C"/>
</dbReference>
<dbReference type="InterPro" id="IPR020557">
    <property type="entry name" value="Fumarate_lyase_CS"/>
</dbReference>
<dbReference type="InterPro" id="IPR000362">
    <property type="entry name" value="Fumarate_lyase_fam"/>
</dbReference>
<dbReference type="InterPro" id="IPR022761">
    <property type="entry name" value="Fumarate_lyase_N"/>
</dbReference>
<dbReference type="InterPro" id="IPR008948">
    <property type="entry name" value="L-Aspartase-like"/>
</dbReference>
<dbReference type="NCBIfam" id="TIGR00979">
    <property type="entry name" value="fumC_II"/>
    <property type="match status" value="1"/>
</dbReference>
<dbReference type="NCBIfam" id="NF008909">
    <property type="entry name" value="PRK12273.1"/>
    <property type="match status" value="1"/>
</dbReference>
<dbReference type="PANTHER" id="PTHR11444">
    <property type="entry name" value="ASPARTATEAMMONIA/ARGININOSUCCINATE/ADENYLOSUCCINATE LYASE"/>
    <property type="match status" value="1"/>
</dbReference>
<dbReference type="PANTHER" id="PTHR11444:SF1">
    <property type="entry name" value="FUMARATE HYDRATASE, MITOCHONDRIAL"/>
    <property type="match status" value="1"/>
</dbReference>
<dbReference type="Pfam" id="PF10415">
    <property type="entry name" value="FumaraseC_C"/>
    <property type="match status" value="1"/>
</dbReference>
<dbReference type="Pfam" id="PF00206">
    <property type="entry name" value="Lyase_1"/>
    <property type="match status" value="1"/>
</dbReference>
<dbReference type="PRINTS" id="PR00145">
    <property type="entry name" value="ARGSUCLYASE"/>
</dbReference>
<dbReference type="PRINTS" id="PR00149">
    <property type="entry name" value="FUMRATELYASE"/>
</dbReference>
<dbReference type="SUPFAM" id="SSF48557">
    <property type="entry name" value="L-aspartase-like"/>
    <property type="match status" value="1"/>
</dbReference>
<dbReference type="PROSITE" id="PS00163">
    <property type="entry name" value="FUMARATE_LYASES"/>
    <property type="match status" value="1"/>
</dbReference>
<feature type="chain" id="PRO_0000161320" description="Fumarate hydratase class II">
    <location>
        <begin position="1"/>
        <end position="461"/>
    </location>
</feature>
<feature type="active site" description="Proton donor/acceptor" evidence="1">
    <location>
        <position position="186"/>
    </location>
</feature>
<feature type="active site" evidence="1">
    <location>
        <position position="316"/>
    </location>
</feature>
<feature type="binding site" evidence="1">
    <location>
        <begin position="97"/>
        <end position="99"/>
    </location>
    <ligand>
        <name>substrate</name>
    </ligand>
</feature>
<feature type="binding site" description="in site B" evidence="1">
    <location>
        <begin position="127"/>
        <end position="130"/>
    </location>
    <ligand>
        <name>substrate</name>
    </ligand>
</feature>
<feature type="binding site" evidence="1">
    <location>
        <begin position="137"/>
        <end position="139"/>
    </location>
    <ligand>
        <name>substrate</name>
    </ligand>
</feature>
<feature type="binding site" evidence="1">
    <location>
        <position position="185"/>
    </location>
    <ligand>
        <name>substrate</name>
    </ligand>
</feature>
<feature type="binding site" evidence="1">
    <location>
        <position position="317"/>
    </location>
    <ligand>
        <name>substrate</name>
    </ligand>
</feature>
<feature type="binding site" evidence="1">
    <location>
        <begin position="322"/>
        <end position="324"/>
    </location>
    <ligand>
        <name>substrate</name>
    </ligand>
</feature>
<feature type="site" description="Important for catalytic activity" evidence="1">
    <location>
        <position position="329"/>
    </location>
</feature>
<accession>Q49YP8</accession>
<reference key="1">
    <citation type="journal article" date="2005" name="Proc. Natl. Acad. Sci. U.S.A.">
        <title>Whole genome sequence of Staphylococcus saprophyticus reveals the pathogenesis of uncomplicated urinary tract infection.</title>
        <authorList>
            <person name="Kuroda M."/>
            <person name="Yamashita A."/>
            <person name="Hirakawa H."/>
            <person name="Kumano M."/>
            <person name="Morikawa K."/>
            <person name="Higashide M."/>
            <person name="Maruyama A."/>
            <person name="Inose Y."/>
            <person name="Matoba K."/>
            <person name="Toh H."/>
            <person name="Kuhara S."/>
            <person name="Hattori M."/>
            <person name="Ohta T."/>
        </authorList>
    </citation>
    <scope>NUCLEOTIDE SEQUENCE [LARGE SCALE GENOMIC DNA]</scope>
    <source>
        <strain>ATCC 15305 / DSM 20229 / NCIMB 8711 / NCTC 7292 / S-41</strain>
    </source>
</reference>